<organism>
    <name type="scientific">Gloeothece citriformis (strain PCC 7424)</name>
    <name type="common">Cyanothece sp. (strain PCC 7424)</name>
    <dbReference type="NCBI Taxonomy" id="65393"/>
    <lineage>
        <taxon>Bacteria</taxon>
        <taxon>Bacillati</taxon>
        <taxon>Cyanobacteriota</taxon>
        <taxon>Cyanophyceae</taxon>
        <taxon>Oscillatoriophycideae</taxon>
        <taxon>Chroococcales</taxon>
        <taxon>Aphanothecaceae</taxon>
        <taxon>Gloeothece</taxon>
        <taxon>Gloeothece citriformis</taxon>
    </lineage>
</organism>
<comment type="function">
    <text evidence="1">Catalyzes the NADPH-dependent reduction of 7-cyano-7-deazaguanine (preQ0) to 7-aminomethyl-7-deazaguanine (preQ1).</text>
</comment>
<comment type="catalytic activity">
    <reaction evidence="1">
        <text>7-aminomethyl-7-carbaguanine + 2 NADP(+) = 7-cyano-7-deazaguanine + 2 NADPH + 3 H(+)</text>
        <dbReference type="Rhea" id="RHEA:13409"/>
        <dbReference type="ChEBI" id="CHEBI:15378"/>
        <dbReference type="ChEBI" id="CHEBI:45075"/>
        <dbReference type="ChEBI" id="CHEBI:57783"/>
        <dbReference type="ChEBI" id="CHEBI:58349"/>
        <dbReference type="ChEBI" id="CHEBI:58703"/>
        <dbReference type="EC" id="1.7.1.13"/>
    </reaction>
</comment>
<comment type="pathway">
    <text evidence="1">tRNA modification; tRNA-queuosine biosynthesis.</text>
</comment>
<comment type="subcellular location">
    <subcellularLocation>
        <location evidence="1">Cytoplasm</location>
    </subcellularLocation>
</comment>
<comment type="similarity">
    <text evidence="1">Belongs to the GTP cyclohydrolase I family. QueF type 1 subfamily.</text>
</comment>
<keyword id="KW-0963">Cytoplasm</keyword>
<keyword id="KW-0521">NADP</keyword>
<keyword id="KW-0560">Oxidoreductase</keyword>
<keyword id="KW-0671">Queuosine biosynthesis</keyword>
<keyword id="KW-1185">Reference proteome</keyword>
<reference key="1">
    <citation type="journal article" date="2011" name="MBio">
        <title>Novel metabolic attributes of the genus Cyanothece, comprising a group of unicellular nitrogen-fixing Cyanobacteria.</title>
        <authorList>
            <person name="Bandyopadhyay A."/>
            <person name="Elvitigala T."/>
            <person name="Welsh E."/>
            <person name="Stockel J."/>
            <person name="Liberton M."/>
            <person name="Min H."/>
            <person name="Sherman L.A."/>
            <person name="Pakrasi H.B."/>
        </authorList>
    </citation>
    <scope>NUCLEOTIDE SEQUENCE [LARGE SCALE GENOMIC DNA]</scope>
    <source>
        <strain>PCC 7424</strain>
    </source>
</reference>
<dbReference type="EC" id="1.7.1.13" evidence="1"/>
<dbReference type="EMBL" id="CP001291">
    <property type="protein sequence ID" value="ACK71463.1"/>
    <property type="molecule type" value="Genomic_DNA"/>
</dbReference>
<dbReference type="RefSeq" id="WP_015955060.1">
    <property type="nucleotide sequence ID" value="NC_011729.1"/>
</dbReference>
<dbReference type="SMR" id="B7KBA7"/>
<dbReference type="STRING" id="65393.PCC7424_3061"/>
<dbReference type="KEGG" id="cyc:PCC7424_3061"/>
<dbReference type="eggNOG" id="COG0780">
    <property type="taxonomic scope" value="Bacteria"/>
</dbReference>
<dbReference type="HOGENOM" id="CLU_102489_1_1_3"/>
<dbReference type="OrthoDB" id="9795077at2"/>
<dbReference type="UniPathway" id="UPA00392"/>
<dbReference type="Proteomes" id="UP000002384">
    <property type="component" value="Chromosome"/>
</dbReference>
<dbReference type="GO" id="GO:0005737">
    <property type="term" value="C:cytoplasm"/>
    <property type="evidence" value="ECO:0007669"/>
    <property type="project" value="UniProtKB-SubCell"/>
</dbReference>
<dbReference type="GO" id="GO:0033739">
    <property type="term" value="F:preQ1 synthase activity"/>
    <property type="evidence" value="ECO:0007669"/>
    <property type="project" value="UniProtKB-UniRule"/>
</dbReference>
<dbReference type="GO" id="GO:0008616">
    <property type="term" value="P:queuosine biosynthetic process"/>
    <property type="evidence" value="ECO:0007669"/>
    <property type="project" value="UniProtKB-UniRule"/>
</dbReference>
<dbReference type="GO" id="GO:0006400">
    <property type="term" value="P:tRNA modification"/>
    <property type="evidence" value="ECO:0007669"/>
    <property type="project" value="UniProtKB-UniRule"/>
</dbReference>
<dbReference type="Gene3D" id="3.30.1130.10">
    <property type="match status" value="1"/>
</dbReference>
<dbReference type="HAMAP" id="MF_00818">
    <property type="entry name" value="QueF_type1"/>
    <property type="match status" value="1"/>
</dbReference>
<dbReference type="InterPro" id="IPR043133">
    <property type="entry name" value="GTP-CH-I_C/QueF"/>
</dbReference>
<dbReference type="InterPro" id="IPR050084">
    <property type="entry name" value="NADPH_dep_7-cyano-7-deazaG_red"/>
</dbReference>
<dbReference type="InterPro" id="IPR029500">
    <property type="entry name" value="QueF"/>
</dbReference>
<dbReference type="InterPro" id="IPR016856">
    <property type="entry name" value="QueF_type1"/>
</dbReference>
<dbReference type="NCBIfam" id="TIGR03139">
    <property type="entry name" value="QueF-II"/>
    <property type="match status" value="1"/>
</dbReference>
<dbReference type="PANTHER" id="PTHR34354">
    <property type="entry name" value="NADPH-DEPENDENT 7-CYANO-7-DEAZAGUANINE REDUCTASE"/>
    <property type="match status" value="1"/>
</dbReference>
<dbReference type="PANTHER" id="PTHR34354:SF1">
    <property type="entry name" value="NADPH-DEPENDENT 7-CYANO-7-DEAZAGUANINE REDUCTASE"/>
    <property type="match status" value="1"/>
</dbReference>
<dbReference type="Pfam" id="PF14489">
    <property type="entry name" value="QueF"/>
    <property type="match status" value="1"/>
</dbReference>
<dbReference type="PIRSF" id="PIRSF027377">
    <property type="entry name" value="Nitrile_oxidored_QueF"/>
    <property type="match status" value="1"/>
</dbReference>
<dbReference type="SUPFAM" id="SSF55620">
    <property type="entry name" value="Tetrahydrobiopterin biosynthesis enzymes-like"/>
    <property type="match status" value="1"/>
</dbReference>
<feature type="chain" id="PRO_1000134301" description="NADPH-dependent 7-cyano-7-deazaguanine reductase">
    <location>
        <begin position="1"/>
        <end position="138"/>
    </location>
</feature>
<feature type="active site" description="Thioimide intermediate" evidence="1">
    <location>
        <position position="53"/>
    </location>
</feature>
<feature type="active site" description="Proton donor" evidence="1">
    <location>
        <position position="60"/>
    </location>
</feature>
<feature type="binding site" evidence="1">
    <location>
        <begin position="75"/>
        <end position="77"/>
    </location>
    <ligand>
        <name>substrate</name>
    </ligand>
</feature>
<feature type="binding site" evidence="1">
    <location>
        <begin position="94"/>
        <end position="95"/>
    </location>
    <ligand>
        <name>substrate</name>
    </ligand>
</feature>
<proteinExistence type="inferred from homology"/>
<gene>
    <name evidence="1" type="primary">queF</name>
    <name type="ordered locus">PCC7424_3061</name>
</gene>
<evidence type="ECO:0000255" key="1">
    <source>
        <dbReference type="HAMAP-Rule" id="MF_00818"/>
    </source>
</evidence>
<sequence length="138" mass="15938">MSNSIEQQQTPEVPPLKYGEREIAKGELFTFPNPRIGRHYQIHITLPEFTCKCPFSGYPDFATIYLTYVPNEKVVELKAIKLYINNYRDLYISHEEAVNQILDDFVAACDPLEVQIKGDYNPRGNVHTVIEVNYQKAN</sequence>
<name>QUEF_GLOC7</name>
<accession>B7KBA7</accession>
<protein>
    <recommendedName>
        <fullName evidence="1">NADPH-dependent 7-cyano-7-deazaguanine reductase</fullName>
        <ecNumber evidence="1">1.7.1.13</ecNumber>
    </recommendedName>
    <alternativeName>
        <fullName evidence="1">7-cyano-7-carbaguanine reductase</fullName>
    </alternativeName>
    <alternativeName>
        <fullName evidence="1">NADPH-dependent nitrile oxidoreductase</fullName>
    </alternativeName>
    <alternativeName>
        <fullName evidence="1">PreQ(0) reductase</fullName>
    </alternativeName>
</protein>